<organism>
    <name type="scientific">Bacillus cereus (strain AH820)</name>
    <dbReference type="NCBI Taxonomy" id="405535"/>
    <lineage>
        <taxon>Bacteria</taxon>
        <taxon>Bacillati</taxon>
        <taxon>Bacillota</taxon>
        <taxon>Bacilli</taxon>
        <taxon>Bacillales</taxon>
        <taxon>Bacillaceae</taxon>
        <taxon>Bacillus</taxon>
        <taxon>Bacillus cereus group</taxon>
    </lineage>
</organism>
<comment type="function">
    <text evidence="1">Acts as a chaperone.</text>
</comment>
<comment type="induction">
    <text evidence="1">By stress conditions e.g. heat shock.</text>
</comment>
<comment type="similarity">
    <text evidence="1">Belongs to the heat shock protein 70 family.</text>
</comment>
<dbReference type="EMBL" id="CP001283">
    <property type="protein sequence ID" value="ACK90415.1"/>
    <property type="molecule type" value="Genomic_DNA"/>
</dbReference>
<dbReference type="RefSeq" id="WP_000034699.1">
    <property type="nucleotide sequence ID" value="NC_011773.1"/>
</dbReference>
<dbReference type="SMR" id="B7JN39"/>
<dbReference type="GeneID" id="45024191"/>
<dbReference type="KEGG" id="bcu:BCAH820_4336"/>
<dbReference type="HOGENOM" id="CLU_005965_2_4_9"/>
<dbReference type="Proteomes" id="UP000001363">
    <property type="component" value="Chromosome"/>
</dbReference>
<dbReference type="GO" id="GO:0005524">
    <property type="term" value="F:ATP binding"/>
    <property type="evidence" value="ECO:0007669"/>
    <property type="project" value="UniProtKB-UniRule"/>
</dbReference>
<dbReference type="GO" id="GO:0140662">
    <property type="term" value="F:ATP-dependent protein folding chaperone"/>
    <property type="evidence" value="ECO:0007669"/>
    <property type="project" value="InterPro"/>
</dbReference>
<dbReference type="GO" id="GO:0051082">
    <property type="term" value="F:unfolded protein binding"/>
    <property type="evidence" value="ECO:0007669"/>
    <property type="project" value="InterPro"/>
</dbReference>
<dbReference type="CDD" id="cd10234">
    <property type="entry name" value="ASKHA_NBD_HSP70_DnaK-like"/>
    <property type="match status" value="1"/>
</dbReference>
<dbReference type="FunFam" id="2.60.34.10:FF:000014">
    <property type="entry name" value="Chaperone protein DnaK HSP70"/>
    <property type="match status" value="1"/>
</dbReference>
<dbReference type="FunFam" id="1.20.1270.10:FF:000004">
    <property type="entry name" value="Molecular chaperone DnaK"/>
    <property type="match status" value="1"/>
</dbReference>
<dbReference type="FunFam" id="3.30.420.40:FF:000071">
    <property type="entry name" value="Molecular chaperone DnaK"/>
    <property type="match status" value="1"/>
</dbReference>
<dbReference type="FunFam" id="3.90.640.10:FF:000003">
    <property type="entry name" value="Molecular chaperone DnaK"/>
    <property type="match status" value="1"/>
</dbReference>
<dbReference type="Gene3D" id="1.20.1270.10">
    <property type="match status" value="1"/>
</dbReference>
<dbReference type="Gene3D" id="3.30.420.40">
    <property type="match status" value="2"/>
</dbReference>
<dbReference type="Gene3D" id="3.90.640.10">
    <property type="entry name" value="Actin, Chain A, domain 4"/>
    <property type="match status" value="1"/>
</dbReference>
<dbReference type="Gene3D" id="2.60.34.10">
    <property type="entry name" value="Substrate Binding Domain Of DNAk, Chain A, domain 1"/>
    <property type="match status" value="1"/>
</dbReference>
<dbReference type="HAMAP" id="MF_00332">
    <property type="entry name" value="DnaK"/>
    <property type="match status" value="1"/>
</dbReference>
<dbReference type="InterPro" id="IPR043129">
    <property type="entry name" value="ATPase_NBD"/>
</dbReference>
<dbReference type="InterPro" id="IPR012725">
    <property type="entry name" value="Chaperone_DnaK"/>
</dbReference>
<dbReference type="InterPro" id="IPR018181">
    <property type="entry name" value="Heat_shock_70_CS"/>
</dbReference>
<dbReference type="InterPro" id="IPR029048">
    <property type="entry name" value="HSP70_C_sf"/>
</dbReference>
<dbReference type="InterPro" id="IPR029047">
    <property type="entry name" value="HSP70_peptide-bd_sf"/>
</dbReference>
<dbReference type="InterPro" id="IPR013126">
    <property type="entry name" value="Hsp_70_fam"/>
</dbReference>
<dbReference type="NCBIfam" id="NF001413">
    <property type="entry name" value="PRK00290.1"/>
    <property type="match status" value="1"/>
</dbReference>
<dbReference type="NCBIfam" id="TIGR02350">
    <property type="entry name" value="prok_dnaK"/>
    <property type="match status" value="1"/>
</dbReference>
<dbReference type="PANTHER" id="PTHR19375">
    <property type="entry name" value="HEAT SHOCK PROTEIN 70KDA"/>
    <property type="match status" value="1"/>
</dbReference>
<dbReference type="Pfam" id="PF00012">
    <property type="entry name" value="HSP70"/>
    <property type="match status" value="1"/>
</dbReference>
<dbReference type="PRINTS" id="PR00301">
    <property type="entry name" value="HEATSHOCK70"/>
</dbReference>
<dbReference type="SUPFAM" id="SSF53067">
    <property type="entry name" value="Actin-like ATPase domain"/>
    <property type="match status" value="2"/>
</dbReference>
<dbReference type="SUPFAM" id="SSF100934">
    <property type="entry name" value="Heat shock protein 70kD (HSP70), C-terminal subdomain"/>
    <property type="match status" value="1"/>
</dbReference>
<dbReference type="SUPFAM" id="SSF100920">
    <property type="entry name" value="Heat shock protein 70kD (HSP70), peptide-binding domain"/>
    <property type="match status" value="1"/>
</dbReference>
<dbReference type="PROSITE" id="PS00297">
    <property type="entry name" value="HSP70_1"/>
    <property type="match status" value="1"/>
</dbReference>
<dbReference type="PROSITE" id="PS00329">
    <property type="entry name" value="HSP70_2"/>
    <property type="match status" value="1"/>
</dbReference>
<dbReference type="PROSITE" id="PS01036">
    <property type="entry name" value="HSP70_3"/>
    <property type="match status" value="1"/>
</dbReference>
<name>DNAK_BACC0</name>
<sequence length="611" mass="65767">MSKIIGIDLGTTNSCVAVMEGGEPKVIPNPEGNRTTPSVVAFKNEERQVGEVAKRQAITNPNTIMSVKRHMGTDYKVEVEGKDYTPQEISAIILQNLKASAEAYLGETVTKAVITVPAYFNDAERQATKDAGRIAGLEVERIINEPTAAALAYGLEKQDEEQKILVYDLGGGTFDVSILELADGTFEVISTAGDNRLGGDDFDQVIIDHLVAEFKKENNIDLSQDKMALQRLKDAAEKAKKDLSGVTQTQISLPFISAGAAGPLHLELTLTRAKFEELSAGLVERTLEPTRRALKDAGFAPSELDKVILVGGSTRIPAVQEAIKRETGKEPYKGVNPDEVVALGAAVQGGVLTGDVEGVLLLDVTPLSLGIETMGGVFTKLIERNTTIPTSKSQVFSTAADNQPAVDIHVLQGERPMSADNKTLGRFQLTDLPPAPRGIPQIEVTFDIDANGIVNVRAKDLGTSKEQAITIQSSSGLSDEEVERMVQEAEANADADQKRKEEVELRNEADQLVFQTDKVVKDLEGKVDAAEVAKATEAKEALQAAIEKNELEEIRAKKDALQEIVQQLTVKLYEQAQAAAGQAEGAEGAQDAGAKKDNVVDAEFEEVKEDK</sequence>
<proteinExistence type="inferred from homology"/>
<feature type="chain" id="PRO_1000119665" description="Chaperone protein DnaK">
    <location>
        <begin position="1"/>
        <end position="611"/>
    </location>
</feature>
<feature type="region of interest" description="Disordered" evidence="2">
    <location>
        <begin position="577"/>
        <end position="598"/>
    </location>
</feature>
<feature type="compositionally biased region" description="Low complexity" evidence="2">
    <location>
        <begin position="577"/>
        <end position="592"/>
    </location>
</feature>
<feature type="modified residue" description="Phosphothreonine; by autocatalysis" evidence="1">
    <location>
        <position position="173"/>
    </location>
</feature>
<keyword id="KW-0067">ATP-binding</keyword>
<keyword id="KW-0143">Chaperone</keyword>
<keyword id="KW-0547">Nucleotide-binding</keyword>
<keyword id="KW-0597">Phosphoprotein</keyword>
<keyword id="KW-0346">Stress response</keyword>
<reference key="1">
    <citation type="submission" date="2008-10" db="EMBL/GenBank/DDBJ databases">
        <title>Genome sequence of Bacillus cereus AH820.</title>
        <authorList>
            <person name="Dodson R.J."/>
            <person name="Durkin A.S."/>
            <person name="Rosovitz M.J."/>
            <person name="Rasko D.A."/>
            <person name="Hoffmaster A."/>
            <person name="Ravel J."/>
            <person name="Sutton G."/>
        </authorList>
    </citation>
    <scope>NUCLEOTIDE SEQUENCE [LARGE SCALE GENOMIC DNA]</scope>
    <source>
        <strain>AH820</strain>
    </source>
</reference>
<evidence type="ECO:0000255" key="1">
    <source>
        <dbReference type="HAMAP-Rule" id="MF_00332"/>
    </source>
</evidence>
<evidence type="ECO:0000256" key="2">
    <source>
        <dbReference type="SAM" id="MobiDB-lite"/>
    </source>
</evidence>
<accession>B7JN39</accession>
<gene>
    <name evidence="1" type="primary">dnaK</name>
    <name type="ordered locus">BCAH820_4336</name>
</gene>
<protein>
    <recommendedName>
        <fullName evidence="1">Chaperone protein DnaK</fullName>
    </recommendedName>
    <alternativeName>
        <fullName evidence="1">HSP70</fullName>
    </alternativeName>
    <alternativeName>
        <fullName evidence="1">Heat shock 70 kDa protein</fullName>
    </alternativeName>
    <alternativeName>
        <fullName evidence="1">Heat shock protein 70</fullName>
    </alternativeName>
</protein>